<protein>
    <recommendedName>
        <fullName>PI protein</fullName>
    </recommendedName>
    <alternativeName>
        <fullName>Replication initiation protein</fullName>
    </alternativeName>
</protein>
<proteinExistence type="evidence at protein level"/>
<accession>P03067</accession>
<accession>P10029</accession>
<organism>
    <name type="scientific">Escherichia coli</name>
    <dbReference type="NCBI Taxonomy" id="562"/>
    <lineage>
        <taxon>Bacteria</taxon>
        <taxon>Pseudomonadati</taxon>
        <taxon>Pseudomonadota</taxon>
        <taxon>Gammaproteobacteria</taxon>
        <taxon>Enterobacterales</taxon>
        <taxon>Enterobacteriaceae</taxon>
        <taxon>Escherichia</taxon>
    </lineage>
</organism>
<sequence length="305" mass="34994">MRLKVMMDVNKKTKIRHRNELNHTLAQLPLPAKRVMYMALAPIDSKEPLERGRVFKIRAEDLAALAKITPSLAYRQLKEGGKLLGASKISLRGDDIIALAKELNLPFTAKNSPEELDLNIIEWIAYSPDEGYLSLKFTRTIEPYISSLIGKKNKFTTQLLTASLRLSSQYSSSLYQLIRKHYSNFKKKNYFIISVDELKEELIAYTFDKDGNIEYKYPDFPIFKRDVLNKAIAEIKKKTEISFVGFTVHEKEGRKISKLKFEFVVDEDEFSGDKDDEAFFMNLSEADAAFLKVFDETVPPKKAKG</sequence>
<feature type="chain" id="PRO_0000068415" description="PI protein">
    <location>
        <begin position="1"/>
        <end position="305"/>
    </location>
</feature>
<feature type="sequence variant" description="In mutant COP41.">
    <original>T</original>
    <variation>I</variation>
    <location>
        <position position="108"/>
    </location>
</feature>
<feature type="sequence variant" description="In mutant COP50.">
    <original>P</original>
    <variation>S</variation>
    <location>
        <position position="113"/>
    </location>
</feature>
<feature type="sequence variant" description="In mutants TS22 and TRCOP21.">
    <original>T</original>
    <variation>I</variation>
    <location>
        <position position="138"/>
    </location>
</feature>
<feature type="sequence variant" description="In mutants COP21 and TRCOP21.">
    <original>A</original>
    <variation>S</variation>
    <location>
        <position position="162"/>
    </location>
</feature>
<feature type="sequence conflict" description="In Ref. 2." evidence="1" ref="2">
    <original>P</original>
    <variation>N</variation>
    <location>
        <position position="128"/>
    </location>
</feature>
<feature type="sequence conflict" description="In Ref. 3." evidence="1" ref="3">
    <original>F</original>
    <variation>L</variation>
    <location>
        <position position="246"/>
    </location>
</feature>
<feature type="strand" evidence="2">
    <location>
        <begin position="14"/>
        <end position="18"/>
    </location>
</feature>
<feature type="helix" evidence="2">
    <location>
        <begin position="19"/>
        <end position="21"/>
    </location>
</feature>
<feature type="helix" evidence="2">
    <location>
        <begin position="22"/>
        <end position="27"/>
    </location>
</feature>
<feature type="helix" evidence="2">
    <location>
        <begin position="30"/>
        <end position="41"/>
    </location>
</feature>
<feature type="strand" evidence="2">
    <location>
        <begin position="55"/>
        <end position="58"/>
    </location>
</feature>
<feature type="helix" evidence="2">
    <location>
        <begin position="59"/>
        <end position="66"/>
    </location>
</feature>
<feature type="helix" evidence="2">
    <location>
        <begin position="70"/>
        <end position="86"/>
    </location>
</feature>
<feature type="helix" evidence="2">
    <location>
        <begin position="95"/>
        <end position="102"/>
    </location>
</feature>
<feature type="strand" evidence="2">
    <location>
        <begin position="119"/>
        <end position="127"/>
    </location>
</feature>
<feature type="turn" evidence="2">
    <location>
        <begin position="128"/>
        <end position="131"/>
    </location>
</feature>
<feature type="strand" evidence="2">
    <location>
        <begin position="132"/>
        <end position="137"/>
    </location>
</feature>
<feature type="turn" evidence="2">
    <location>
        <begin position="139"/>
        <end position="141"/>
    </location>
</feature>
<feature type="helix" evidence="2">
    <location>
        <begin position="142"/>
        <end position="144"/>
    </location>
</feature>
<feature type="helix" evidence="2">
    <location>
        <begin position="152"/>
        <end position="154"/>
    </location>
</feature>
<feature type="strand" evidence="2">
    <location>
        <begin position="155"/>
        <end position="159"/>
    </location>
</feature>
<feature type="helix" evidence="2">
    <location>
        <begin position="160"/>
        <end position="165"/>
    </location>
</feature>
<feature type="helix" evidence="2">
    <location>
        <begin position="169"/>
        <end position="180"/>
    </location>
</feature>
<feature type="strand" evidence="2">
    <location>
        <begin position="185"/>
        <end position="187"/>
    </location>
</feature>
<feature type="strand" evidence="2">
    <location>
        <begin position="189"/>
        <end position="194"/>
    </location>
</feature>
<feature type="helix" evidence="2">
    <location>
        <begin position="195"/>
        <end position="202"/>
    </location>
</feature>
<feature type="strand" evidence="2">
    <location>
        <begin position="209"/>
        <end position="212"/>
    </location>
</feature>
<feature type="strand" evidence="2">
    <location>
        <begin position="214"/>
        <end position="217"/>
    </location>
</feature>
<feature type="helix" evidence="2">
    <location>
        <begin position="220"/>
        <end position="226"/>
    </location>
</feature>
<feature type="helix" evidence="2">
    <location>
        <begin position="228"/>
        <end position="238"/>
    </location>
</feature>
<feature type="strand" evidence="2">
    <location>
        <begin position="239"/>
        <end position="250"/>
    </location>
</feature>
<feature type="strand" evidence="2">
    <location>
        <begin position="258"/>
        <end position="265"/>
    </location>
</feature>
<gene>
    <name type="primary">pir</name>
</gene>
<comment type="function">
    <text>Initiation for plasmid R6K DNA replication.</text>
</comment>
<comment type="subunit">
    <text>Homodimer.</text>
</comment>
<comment type="miscellaneous">
    <text>The expression of PI protein is autoregulated.</text>
</comment>
<comment type="miscellaneous">
    <text>PI protein binds to direct repeated sequences within ori-gamma region for replication.</text>
</comment>
<comment type="similarity">
    <text evidence="1">Belongs to the initiator RepB protein family.</text>
</comment>
<reference key="1">
    <citation type="journal article" date="1988" name="FEBS Lett.">
        <title>An initiator protein for plasmid R6K DNA replication. Mutations affecting the copy-number control.</title>
        <authorList>
            <person name="Inuzuka M."/>
            <person name="Wada Y."/>
        </authorList>
    </citation>
    <scope>NUCLEOTIDE SEQUENCE [GENOMIC DNA]</scope>
</reference>
<reference key="2">
    <citation type="journal article" date="1982" name="Proc. Natl. Acad. Sci. U.S.A.">
        <title>Primary structure of the replication initiation protein of plasmid R6K.</title>
        <authorList>
            <person name="Germino J."/>
            <person name="Bastia D."/>
        </authorList>
    </citation>
    <scope>NUCLEOTIDE SEQUENCE [GENOMIC DNA]</scope>
</reference>
<reference key="3">
    <citation type="journal article" date="1985" name="EMBO J.">
        <title>A single amino acid alteration in the initiation protein is responsible for the DNA overproduction phenotype of copy number mutants of plasmid R6K.</title>
        <authorList>
            <person name="Inuzuka M."/>
            <person name="Wada Y."/>
        </authorList>
    </citation>
    <scope>NUCLEOTIDE SEQUENCE [GENOMIC DNA]</scope>
</reference>
<reference key="4">
    <citation type="journal article" date="1985" name="Proc. Natl. Acad. Sci. U.S.A.">
        <title>Replication initiator protein of plasmid R6K autoregulates its own synthesis at the transcriptional step.</title>
        <authorList>
            <person name="Kelley W."/>
            <person name="Bastia D."/>
        </authorList>
    </citation>
    <scope>NUCLEOTIDE SEQUENCE [GENOMIC DNA] OF 1-26</scope>
</reference>
<reference key="5">
    <citation type="journal article" date="1990" name="Mol. Gen. Genet.">
        <title>N-terminal truncated forms of the bifunctional pi initiation protein express negative activity on plasmid R6K replication.</title>
        <authorList>
            <person name="Greener A."/>
            <person name="Filutowicz M.S."/>
            <person name="McEachern M.J."/>
            <person name="Helinski D.R."/>
        </authorList>
    </citation>
    <scope>NUCLEOTIDE SEQUENCE [GENOMIC DNA] OF 75-117</scope>
</reference>
<geneLocation type="plasmid">
    <name>R6K</name>
</geneLocation>
<evidence type="ECO:0000305" key="1"/>
<evidence type="ECO:0007829" key="2">
    <source>
        <dbReference type="PDB" id="2NRA"/>
    </source>
</evidence>
<dbReference type="EMBL" id="Y00768">
    <property type="protein sequence ID" value="CAA68737.1"/>
    <property type="molecule type" value="Genomic_DNA"/>
</dbReference>
<dbReference type="EMBL" id="J01779">
    <property type="status" value="NOT_ANNOTATED_CDS"/>
    <property type="molecule type" value="Genomic_DNA"/>
</dbReference>
<dbReference type="EMBL" id="M11128">
    <property type="protein sequence ID" value="AAA26084.1"/>
    <property type="molecule type" value="Genomic_DNA"/>
</dbReference>
<dbReference type="PIR" id="S02261">
    <property type="entry name" value="IDECRK"/>
</dbReference>
<dbReference type="PDB" id="2NRA">
    <property type="method" value="X-ray"/>
    <property type="resolution" value="3.10 A"/>
    <property type="chains" value="C=1-276"/>
</dbReference>
<dbReference type="PDBsum" id="2NRA"/>
<dbReference type="SMR" id="P03067"/>
<dbReference type="EvolutionaryTrace" id="P03067"/>
<dbReference type="GO" id="GO:0003887">
    <property type="term" value="F:DNA-directed DNA polymerase activity"/>
    <property type="evidence" value="ECO:0007669"/>
    <property type="project" value="InterPro"/>
</dbReference>
<dbReference type="GO" id="GO:0006270">
    <property type="term" value="P:DNA replication initiation"/>
    <property type="evidence" value="ECO:0007669"/>
    <property type="project" value="InterPro"/>
</dbReference>
<dbReference type="Gene3D" id="1.10.10.10">
    <property type="entry name" value="Winged helix-like DNA-binding domain superfamily/Winged helix DNA-binding domain"/>
    <property type="match status" value="2"/>
</dbReference>
<dbReference type="InterPro" id="IPR000525">
    <property type="entry name" value="Initiator_Rep_WH1"/>
</dbReference>
<dbReference type="InterPro" id="IPR036388">
    <property type="entry name" value="WH-like_DNA-bd_sf"/>
</dbReference>
<dbReference type="InterPro" id="IPR036390">
    <property type="entry name" value="WH_DNA-bd_sf"/>
</dbReference>
<dbReference type="Pfam" id="PF21205">
    <property type="entry name" value="Rep3_C"/>
    <property type="match status" value="1"/>
</dbReference>
<dbReference type="Pfam" id="PF01051">
    <property type="entry name" value="Rep3_N"/>
    <property type="match status" value="1"/>
</dbReference>
<dbReference type="SUPFAM" id="SSF46785">
    <property type="entry name" value="Winged helix' DNA-binding domain"/>
    <property type="match status" value="2"/>
</dbReference>
<name>PIR_ECOLX</name>
<keyword id="KW-0002">3D-structure</keyword>
<keyword id="KW-0235">DNA replication</keyword>
<keyword id="KW-0614">Plasmid</keyword>